<sequence>MQGSVTEFLKPRLVDIEQVNSTRAKVTLEPLERGFGHTLGNALRRILLSSMPGCAVTEVEIDGVLHEYSSKEGVQEDILEILLNLKGLAVTIEGKDEAMLTLSKSGAGPVIAADITHDGDVTIVNPDHVICHLTGNNDISMRIRVERGRGYVPASARAQTEDDDRPIGRLLVDASFSPVARIAYNVEAARVEQRTDLDKLVIDMTTNGTIDPEEAIRRSATILAEQLDAFVELRDVTEPELKEEKPEFDPILLRPVDDLELTVRSANCLKAEAIHYIGDLVQRTEVELLKTPNLGKKSLTEIKDVLASRGLSLGMRLENWPPASLADDL</sequence>
<reference key="1">
    <citation type="submission" date="2006-12" db="EMBL/GenBank/DDBJ databases">
        <title>Complete sequence of Shewanella sp. W3-18-1.</title>
        <authorList>
            <consortium name="US DOE Joint Genome Institute"/>
            <person name="Copeland A."/>
            <person name="Lucas S."/>
            <person name="Lapidus A."/>
            <person name="Barry K."/>
            <person name="Detter J.C."/>
            <person name="Glavina del Rio T."/>
            <person name="Hammon N."/>
            <person name="Israni S."/>
            <person name="Dalin E."/>
            <person name="Tice H."/>
            <person name="Pitluck S."/>
            <person name="Chain P."/>
            <person name="Malfatti S."/>
            <person name="Shin M."/>
            <person name="Vergez L."/>
            <person name="Schmutz J."/>
            <person name="Larimer F."/>
            <person name="Land M."/>
            <person name="Hauser L."/>
            <person name="Kyrpides N."/>
            <person name="Lykidis A."/>
            <person name="Tiedje J."/>
            <person name="Richardson P."/>
        </authorList>
    </citation>
    <scope>NUCLEOTIDE SEQUENCE [LARGE SCALE GENOMIC DNA]</scope>
    <source>
        <strain>W3-18-1</strain>
    </source>
</reference>
<accession>A1RED9</accession>
<proteinExistence type="inferred from homology"/>
<gene>
    <name evidence="1" type="primary">rpoA</name>
    <name type="ordered locus">Sputw3181_0181</name>
</gene>
<dbReference type="EC" id="2.7.7.6" evidence="1"/>
<dbReference type="EMBL" id="CP000503">
    <property type="protein sequence ID" value="ABM23034.1"/>
    <property type="molecule type" value="Genomic_DNA"/>
</dbReference>
<dbReference type="RefSeq" id="WP_007644468.1">
    <property type="nucleotide sequence ID" value="NC_008750.1"/>
</dbReference>
<dbReference type="SMR" id="A1RED9"/>
<dbReference type="KEGG" id="shw:Sputw3181_0181"/>
<dbReference type="HOGENOM" id="CLU_053084_0_0_6"/>
<dbReference type="Proteomes" id="UP000002597">
    <property type="component" value="Chromosome"/>
</dbReference>
<dbReference type="GO" id="GO:0005737">
    <property type="term" value="C:cytoplasm"/>
    <property type="evidence" value="ECO:0007669"/>
    <property type="project" value="UniProtKB-ARBA"/>
</dbReference>
<dbReference type="GO" id="GO:0000428">
    <property type="term" value="C:DNA-directed RNA polymerase complex"/>
    <property type="evidence" value="ECO:0007669"/>
    <property type="project" value="UniProtKB-KW"/>
</dbReference>
<dbReference type="GO" id="GO:0003677">
    <property type="term" value="F:DNA binding"/>
    <property type="evidence" value="ECO:0007669"/>
    <property type="project" value="UniProtKB-UniRule"/>
</dbReference>
<dbReference type="GO" id="GO:0003899">
    <property type="term" value="F:DNA-directed RNA polymerase activity"/>
    <property type="evidence" value="ECO:0007669"/>
    <property type="project" value="UniProtKB-UniRule"/>
</dbReference>
<dbReference type="GO" id="GO:0046983">
    <property type="term" value="F:protein dimerization activity"/>
    <property type="evidence" value="ECO:0007669"/>
    <property type="project" value="InterPro"/>
</dbReference>
<dbReference type="GO" id="GO:0006351">
    <property type="term" value="P:DNA-templated transcription"/>
    <property type="evidence" value="ECO:0007669"/>
    <property type="project" value="UniProtKB-UniRule"/>
</dbReference>
<dbReference type="CDD" id="cd06928">
    <property type="entry name" value="RNAP_alpha_NTD"/>
    <property type="match status" value="1"/>
</dbReference>
<dbReference type="FunFam" id="1.10.150.20:FF:000001">
    <property type="entry name" value="DNA-directed RNA polymerase subunit alpha"/>
    <property type="match status" value="1"/>
</dbReference>
<dbReference type="FunFam" id="2.170.120.12:FF:000001">
    <property type="entry name" value="DNA-directed RNA polymerase subunit alpha"/>
    <property type="match status" value="1"/>
</dbReference>
<dbReference type="Gene3D" id="1.10.150.20">
    <property type="entry name" value="5' to 3' exonuclease, C-terminal subdomain"/>
    <property type="match status" value="1"/>
</dbReference>
<dbReference type="Gene3D" id="2.170.120.12">
    <property type="entry name" value="DNA-directed RNA polymerase, insert domain"/>
    <property type="match status" value="1"/>
</dbReference>
<dbReference type="Gene3D" id="3.30.1360.10">
    <property type="entry name" value="RNA polymerase, RBP11-like subunit"/>
    <property type="match status" value="1"/>
</dbReference>
<dbReference type="HAMAP" id="MF_00059">
    <property type="entry name" value="RNApol_bact_RpoA"/>
    <property type="match status" value="1"/>
</dbReference>
<dbReference type="InterPro" id="IPR011262">
    <property type="entry name" value="DNA-dir_RNA_pol_insert"/>
</dbReference>
<dbReference type="InterPro" id="IPR011263">
    <property type="entry name" value="DNA-dir_RNA_pol_RpoA/D/Rpb3"/>
</dbReference>
<dbReference type="InterPro" id="IPR011773">
    <property type="entry name" value="DNA-dir_RpoA"/>
</dbReference>
<dbReference type="InterPro" id="IPR036603">
    <property type="entry name" value="RBP11-like"/>
</dbReference>
<dbReference type="InterPro" id="IPR011260">
    <property type="entry name" value="RNAP_asu_C"/>
</dbReference>
<dbReference type="InterPro" id="IPR036643">
    <property type="entry name" value="RNApol_insert_sf"/>
</dbReference>
<dbReference type="NCBIfam" id="NF003513">
    <property type="entry name" value="PRK05182.1-2"/>
    <property type="match status" value="1"/>
</dbReference>
<dbReference type="NCBIfam" id="NF003519">
    <property type="entry name" value="PRK05182.2-5"/>
    <property type="match status" value="1"/>
</dbReference>
<dbReference type="NCBIfam" id="TIGR02027">
    <property type="entry name" value="rpoA"/>
    <property type="match status" value="1"/>
</dbReference>
<dbReference type="Pfam" id="PF01000">
    <property type="entry name" value="RNA_pol_A_bac"/>
    <property type="match status" value="1"/>
</dbReference>
<dbReference type="Pfam" id="PF03118">
    <property type="entry name" value="RNA_pol_A_CTD"/>
    <property type="match status" value="1"/>
</dbReference>
<dbReference type="Pfam" id="PF01193">
    <property type="entry name" value="RNA_pol_L"/>
    <property type="match status" value="1"/>
</dbReference>
<dbReference type="SMART" id="SM00662">
    <property type="entry name" value="RPOLD"/>
    <property type="match status" value="1"/>
</dbReference>
<dbReference type="SUPFAM" id="SSF47789">
    <property type="entry name" value="C-terminal domain of RNA polymerase alpha subunit"/>
    <property type="match status" value="1"/>
</dbReference>
<dbReference type="SUPFAM" id="SSF56553">
    <property type="entry name" value="Insert subdomain of RNA polymerase alpha subunit"/>
    <property type="match status" value="1"/>
</dbReference>
<dbReference type="SUPFAM" id="SSF55257">
    <property type="entry name" value="RBP11-like subunits of RNA polymerase"/>
    <property type="match status" value="1"/>
</dbReference>
<evidence type="ECO:0000255" key="1">
    <source>
        <dbReference type="HAMAP-Rule" id="MF_00059"/>
    </source>
</evidence>
<organism>
    <name type="scientific">Shewanella sp. (strain W3-18-1)</name>
    <dbReference type="NCBI Taxonomy" id="351745"/>
    <lineage>
        <taxon>Bacteria</taxon>
        <taxon>Pseudomonadati</taxon>
        <taxon>Pseudomonadota</taxon>
        <taxon>Gammaproteobacteria</taxon>
        <taxon>Alteromonadales</taxon>
        <taxon>Shewanellaceae</taxon>
        <taxon>Shewanella</taxon>
    </lineage>
</organism>
<name>RPOA_SHESW</name>
<keyword id="KW-0240">DNA-directed RNA polymerase</keyword>
<keyword id="KW-0548">Nucleotidyltransferase</keyword>
<keyword id="KW-0804">Transcription</keyword>
<keyword id="KW-0808">Transferase</keyword>
<protein>
    <recommendedName>
        <fullName evidence="1">DNA-directed RNA polymerase subunit alpha</fullName>
        <shortName evidence="1">RNAP subunit alpha</shortName>
        <ecNumber evidence="1">2.7.7.6</ecNumber>
    </recommendedName>
    <alternativeName>
        <fullName evidence="1">RNA polymerase subunit alpha</fullName>
    </alternativeName>
    <alternativeName>
        <fullName evidence="1">Transcriptase subunit alpha</fullName>
    </alternativeName>
</protein>
<comment type="function">
    <text evidence="1">DNA-dependent RNA polymerase catalyzes the transcription of DNA into RNA using the four ribonucleoside triphosphates as substrates.</text>
</comment>
<comment type="catalytic activity">
    <reaction evidence="1">
        <text>RNA(n) + a ribonucleoside 5'-triphosphate = RNA(n+1) + diphosphate</text>
        <dbReference type="Rhea" id="RHEA:21248"/>
        <dbReference type="Rhea" id="RHEA-COMP:14527"/>
        <dbReference type="Rhea" id="RHEA-COMP:17342"/>
        <dbReference type="ChEBI" id="CHEBI:33019"/>
        <dbReference type="ChEBI" id="CHEBI:61557"/>
        <dbReference type="ChEBI" id="CHEBI:140395"/>
        <dbReference type="EC" id="2.7.7.6"/>
    </reaction>
</comment>
<comment type="subunit">
    <text evidence="1">Homodimer. The RNAP catalytic core consists of 2 alpha, 1 beta, 1 beta' and 1 omega subunit. When a sigma factor is associated with the core the holoenzyme is formed, which can initiate transcription.</text>
</comment>
<comment type="domain">
    <text evidence="1">The N-terminal domain is essential for RNAP assembly and basal transcription, whereas the C-terminal domain is involved in interaction with transcriptional regulators and with upstream promoter elements.</text>
</comment>
<comment type="similarity">
    <text evidence="1">Belongs to the RNA polymerase alpha chain family.</text>
</comment>
<feature type="chain" id="PRO_0000296868" description="DNA-directed RNA polymerase subunit alpha">
    <location>
        <begin position="1"/>
        <end position="329"/>
    </location>
</feature>
<feature type="region of interest" description="Alpha N-terminal domain (alpha-NTD)" evidence="1">
    <location>
        <begin position="1"/>
        <end position="234"/>
    </location>
</feature>
<feature type="region of interest" description="Alpha C-terminal domain (alpha-CTD)" evidence="1">
    <location>
        <begin position="248"/>
        <end position="329"/>
    </location>
</feature>